<name>RECA_SHESW</name>
<dbReference type="EMBL" id="CP000503">
    <property type="protein sequence ID" value="ABM24108.1"/>
    <property type="molecule type" value="Genomic_DNA"/>
</dbReference>
<dbReference type="RefSeq" id="WP_011788615.1">
    <property type="nucleotide sequence ID" value="NC_008750.1"/>
</dbReference>
<dbReference type="SMR" id="A1RHG3"/>
<dbReference type="GeneID" id="67444356"/>
<dbReference type="KEGG" id="shw:Sputw3181_1265"/>
<dbReference type="HOGENOM" id="CLU_040469_3_2_6"/>
<dbReference type="Proteomes" id="UP000002597">
    <property type="component" value="Chromosome"/>
</dbReference>
<dbReference type="GO" id="GO:0005829">
    <property type="term" value="C:cytosol"/>
    <property type="evidence" value="ECO:0007669"/>
    <property type="project" value="TreeGrafter"/>
</dbReference>
<dbReference type="GO" id="GO:0005524">
    <property type="term" value="F:ATP binding"/>
    <property type="evidence" value="ECO:0007669"/>
    <property type="project" value="UniProtKB-UniRule"/>
</dbReference>
<dbReference type="GO" id="GO:0016887">
    <property type="term" value="F:ATP hydrolysis activity"/>
    <property type="evidence" value="ECO:0007669"/>
    <property type="project" value="InterPro"/>
</dbReference>
<dbReference type="GO" id="GO:0140664">
    <property type="term" value="F:ATP-dependent DNA damage sensor activity"/>
    <property type="evidence" value="ECO:0007669"/>
    <property type="project" value="InterPro"/>
</dbReference>
<dbReference type="GO" id="GO:0003684">
    <property type="term" value="F:damaged DNA binding"/>
    <property type="evidence" value="ECO:0007669"/>
    <property type="project" value="UniProtKB-UniRule"/>
</dbReference>
<dbReference type="GO" id="GO:0003697">
    <property type="term" value="F:single-stranded DNA binding"/>
    <property type="evidence" value="ECO:0007669"/>
    <property type="project" value="UniProtKB-UniRule"/>
</dbReference>
<dbReference type="GO" id="GO:0006310">
    <property type="term" value="P:DNA recombination"/>
    <property type="evidence" value="ECO:0007669"/>
    <property type="project" value="UniProtKB-UniRule"/>
</dbReference>
<dbReference type="GO" id="GO:0006281">
    <property type="term" value="P:DNA repair"/>
    <property type="evidence" value="ECO:0007669"/>
    <property type="project" value="UniProtKB-UniRule"/>
</dbReference>
<dbReference type="GO" id="GO:0009432">
    <property type="term" value="P:SOS response"/>
    <property type="evidence" value="ECO:0007669"/>
    <property type="project" value="UniProtKB-UniRule"/>
</dbReference>
<dbReference type="CDD" id="cd00983">
    <property type="entry name" value="RecA"/>
    <property type="match status" value="1"/>
</dbReference>
<dbReference type="FunFam" id="3.40.50.300:FF:000087">
    <property type="entry name" value="Recombinase RecA"/>
    <property type="match status" value="1"/>
</dbReference>
<dbReference type="Gene3D" id="3.40.50.300">
    <property type="entry name" value="P-loop containing nucleotide triphosphate hydrolases"/>
    <property type="match status" value="1"/>
</dbReference>
<dbReference type="HAMAP" id="MF_00268">
    <property type="entry name" value="RecA"/>
    <property type="match status" value="1"/>
</dbReference>
<dbReference type="InterPro" id="IPR003593">
    <property type="entry name" value="AAA+_ATPase"/>
</dbReference>
<dbReference type="InterPro" id="IPR013765">
    <property type="entry name" value="DNA_recomb/repair_RecA"/>
</dbReference>
<dbReference type="InterPro" id="IPR020584">
    <property type="entry name" value="DNA_recomb/repair_RecA_CS"/>
</dbReference>
<dbReference type="InterPro" id="IPR027417">
    <property type="entry name" value="P-loop_NTPase"/>
</dbReference>
<dbReference type="InterPro" id="IPR049261">
    <property type="entry name" value="RecA-like_C"/>
</dbReference>
<dbReference type="InterPro" id="IPR049428">
    <property type="entry name" value="RecA-like_N"/>
</dbReference>
<dbReference type="InterPro" id="IPR020588">
    <property type="entry name" value="RecA_ATP-bd"/>
</dbReference>
<dbReference type="InterPro" id="IPR023400">
    <property type="entry name" value="RecA_C_sf"/>
</dbReference>
<dbReference type="InterPro" id="IPR020587">
    <property type="entry name" value="RecA_monomer-monomer_interface"/>
</dbReference>
<dbReference type="NCBIfam" id="TIGR02012">
    <property type="entry name" value="tigrfam_recA"/>
    <property type="match status" value="1"/>
</dbReference>
<dbReference type="PANTHER" id="PTHR45900:SF1">
    <property type="entry name" value="MITOCHONDRIAL DNA REPAIR PROTEIN RECA HOMOLOG-RELATED"/>
    <property type="match status" value="1"/>
</dbReference>
<dbReference type="PANTHER" id="PTHR45900">
    <property type="entry name" value="RECA"/>
    <property type="match status" value="1"/>
</dbReference>
<dbReference type="Pfam" id="PF00154">
    <property type="entry name" value="RecA"/>
    <property type="match status" value="1"/>
</dbReference>
<dbReference type="Pfam" id="PF21096">
    <property type="entry name" value="RecA_C"/>
    <property type="match status" value="1"/>
</dbReference>
<dbReference type="PRINTS" id="PR00142">
    <property type="entry name" value="RECA"/>
</dbReference>
<dbReference type="SMART" id="SM00382">
    <property type="entry name" value="AAA"/>
    <property type="match status" value="1"/>
</dbReference>
<dbReference type="SUPFAM" id="SSF52540">
    <property type="entry name" value="P-loop containing nucleoside triphosphate hydrolases"/>
    <property type="match status" value="1"/>
</dbReference>
<dbReference type="SUPFAM" id="SSF54752">
    <property type="entry name" value="RecA protein, C-terminal domain"/>
    <property type="match status" value="1"/>
</dbReference>
<dbReference type="PROSITE" id="PS00321">
    <property type="entry name" value="RECA_1"/>
    <property type="match status" value="1"/>
</dbReference>
<dbReference type="PROSITE" id="PS50162">
    <property type="entry name" value="RECA_2"/>
    <property type="match status" value="1"/>
</dbReference>
<dbReference type="PROSITE" id="PS50163">
    <property type="entry name" value="RECA_3"/>
    <property type="match status" value="1"/>
</dbReference>
<protein>
    <recommendedName>
        <fullName evidence="1">Protein RecA</fullName>
    </recommendedName>
    <alternativeName>
        <fullName evidence="1">Recombinase A</fullName>
    </alternativeName>
</protein>
<feature type="chain" id="PRO_1000048000" description="Protein RecA">
    <location>
        <begin position="1"/>
        <end position="357"/>
    </location>
</feature>
<feature type="region of interest" description="Disordered" evidence="2">
    <location>
        <begin position="335"/>
        <end position="357"/>
    </location>
</feature>
<feature type="binding site" evidence="1">
    <location>
        <begin position="67"/>
        <end position="74"/>
    </location>
    <ligand>
        <name>ATP</name>
        <dbReference type="ChEBI" id="CHEBI:30616"/>
    </ligand>
</feature>
<organism>
    <name type="scientific">Shewanella sp. (strain W3-18-1)</name>
    <dbReference type="NCBI Taxonomy" id="351745"/>
    <lineage>
        <taxon>Bacteria</taxon>
        <taxon>Pseudomonadati</taxon>
        <taxon>Pseudomonadota</taxon>
        <taxon>Gammaproteobacteria</taxon>
        <taxon>Alteromonadales</taxon>
        <taxon>Shewanellaceae</taxon>
        <taxon>Shewanella</taxon>
    </lineage>
</organism>
<accession>A1RHG3</accession>
<proteinExistence type="inferred from homology"/>
<sequence>MKVDPNKEKALAAVLSQIEKQFGKGSIMKLGEDRSMDVETISTGSLSLDVALGAGGLPMGRIVEIYGPESSGKTTLTLEVIAAAQREGKTCAFIDAEHALDPIYAKKLGVDIDNLLCSQPDTGEQALEICDALTRSGAVDVIVVDSVAALTPKAEIEGEIGDSHMGLAARMMSQAMRKLAGNLKQSNTLLIFINQIRMKIGVMFGNPETTTGGNALKFYASVRLDIRRTGAIKDGDEVVGNETRVKVVKNKVAAPFKQAEFQILYGQGINRTGELVDLGVAHKLIEKAGAWYSYKGDKIGQGRANAGKYLTENPAIAAEIDKTLRELLLSNPSALASSASDDESTEGNIDLETGEIF</sequence>
<reference key="1">
    <citation type="submission" date="2006-12" db="EMBL/GenBank/DDBJ databases">
        <title>Complete sequence of Shewanella sp. W3-18-1.</title>
        <authorList>
            <consortium name="US DOE Joint Genome Institute"/>
            <person name="Copeland A."/>
            <person name="Lucas S."/>
            <person name="Lapidus A."/>
            <person name="Barry K."/>
            <person name="Detter J.C."/>
            <person name="Glavina del Rio T."/>
            <person name="Hammon N."/>
            <person name="Israni S."/>
            <person name="Dalin E."/>
            <person name="Tice H."/>
            <person name="Pitluck S."/>
            <person name="Chain P."/>
            <person name="Malfatti S."/>
            <person name="Shin M."/>
            <person name="Vergez L."/>
            <person name="Schmutz J."/>
            <person name="Larimer F."/>
            <person name="Land M."/>
            <person name="Hauser L."/>
            <person name="Kyrpides N."/>
            <person name="Lykidis A."/>
            <person name="Tiedje J."/>
            <person name="Richardson P."/>
        </authorList>
    </citation>
    <scope>NUCLEOTIDE SEQUENCE [LARGE SCALE GENOMIC DNA]</scope>
    <source>
        <strain>W3-18-1</strain>
    </source>
</reference>
<evidence type="ECO:0000255" key="1">
    <source>
        <dbReference type="HAMAP-Rule" id="MF_00268"/>
    </source>
</evidence>
<evidence type="ECO:0000256" key="2">
    <source>
        <dbReference type="SAM" id="MobiDB-lite"/>
    </source>
</evidence>
<comment type="function">
    <text evidence="1">Can catalyze the hydrolysis of ATP in the presence of single-stranded DNA, the ATP-dependent uptake of single-stranded DNA by duplex DNA, and the ATP-dependent hybridization of homologous single-stranded DNAs. It interacts with LexA causing its activation and leading to its autocatalytic cleavage.</text>
</comment>
<comment type="subcellular location">
    <subcellularLocation>
        <location evidence="1">Cytoplasm</location>
    </subcellularLocation>
</comment>
<comment type="similarity">
    <text evidence="1">Belongs to the RecA family.</text>
</comment>
<keyword id="KW-0067">ATP-binding</keyword>
<keyword id="KW-0963">Cytoplasm</keyword>
<keyword id="KW-0227">DNA damage</keyword>
<keyword id="KW-0233">DNA recombination</keyword>
<keyword id="KW-0234">DNA repair</keyword>
<keyword id="KW-0238">DNA-binding</keyword>
<keyword id="KW-0547">Nucleotide-binding</keyword>
<keyword id="KW-0742">SOS response</keyword>
<gene>
    <name evidence="1" type="primary">recA</name>
    <name type="ordered locus">Sputw3181_1265</name>
</gene>